<gene>
    <name evidence="1" type="primary">moaC</name>
    <name type="ordered locus">Atu1689</name>
    <name type="ORF">AGR_C_3103</name>
</gene>
<evidence type="ECO:0000255" key="1">
    <source>
        <dbReference type="HAMAP-Rule" id="MF_01224"/>
    </source>
</evidence>
<organism>
    <name type="scientific">Agrobacterium fabrum (strain C58 / ATCC 33970)</name>
    <name type="common">Agrobacterium tumefaciens (strain C58)</name>
    <dbReference type="NCBI Taxonomy" id="176299"/>
    <lineage>
        <taxon>Bacteria</taxon>
        <taxon>Pseudomonadati</taxon>
        <taxon>Pseudomonadota</taxon>
        <taxon>Alphaproteobacteria</taxon>
        <taxon>Hyphomicrobiales</taxon>
        <taxon>Rhizobiaceae</taxon>
        <taxon>Rhizobium/Agrobacterium group</taxon>
        <taxon>Agrobacterium</taxon>
        <taxon>Agrobacterium tumefaciens complex</taxon>
    </lineage>
</organism>
<keyword id="KW-0456">Lyase</keyword>
<keyword id="KW-0501">Molybdenum cofactor biosynthesis</keyword>
<keyword id="KW-1185">Reference proteome</keyword>
<comment type="function">
    <text evidence="1">Catalyzes the conversion of (8S)-3',8-cyclo-7,8-dihydroguanosine 5'-triphosphate to cyclic pyranopterin monophosphate (cPMP).</text>
</comment>
<comment type="catalytic activity">
    <reaction evidence="1">
        <text>(8S)-3',8-cyclo-7,8-dihydroguanosine 5'-triphosphate = cyclic pyranopterin phosphate + diphosphate</text>
        <dbReference type="Rhea" id="RHEA:49580"/>
        <dbReference type="ChEBI" id="CHEBI:33019"/>
        <dbReference type="ChEBI" id="CHEBI:59648"/>
        <dbReference type="ChEBI" id="CHEBI:131766"/>
        <dbReference type="EC" id="4.6.1.17"/>
    </reaction>
</comment>
<comment type="pathway">
    <text evidence="1">Cofactor biosynthesis; molybdopterin biosynthesis.</text>
</comment>
<comment type="subunit">
    <text evidence="1">Homohexamer; trimer of dimers.</text>
</comment>
<comment type="similarity">
    <text evidence="1">Belongs to the MoaC family.</text>
</comment>
<proteinExistence type="inferred from homology"/>
<reference key="1">
    <citation type="journal article" date="2001" name="Science">
        <title>The genome of the natural genetic engineer Agrobacterium tumefaciens C58.</title>
        <authorList>
            <person name="Wood D.W."/>
            <person name="Setubal J.C."/>
            <person name="Kaul R."/>
            <person name="Monks D.E."/>
            <person name="Kitajima J.P."/>
            <person name="Okura V.K."/>
            <person name="Zhou Y."/>
            <person name="Chen L."/>
            <person name="Wood G.E."/>
            <person name="Almeida N.F. Jr."/>
            <person name="Woo L."/>
            <person name="Chen Y."/>
            <person name="Paulsen I.T."/>
            <person name="Eisen J.A."/>
            <person name="Karp P.D."/>
            <person name="Bovee D. Sr."/>
            <person name="Chapman P."/>
            <person name="Clendenning J."/>
            <person name="Deatherage G."/>
            <person name="Gillet W."/>
            <person name="Grant C."/>
            <person name="Kutyavin T."/>
            <person name="Levy R."/>
            <person name="Li M.-J."/>
            <person name="McClelland E."/>
            <person name="Palmieri A."/>
            <person name="Raymond C."/>
            <person name="Rouse G."/>
            <person name="Saenphimmachak C."/>
            <person name="Wu Z."/>
            <person name="Romero P."/>
            <person name="Gordon D."/>
            <person name="Zhang S."/>
            <person name="Yoo H."/>
            <person name="Tao Y."/>
            <person name="Biddle P."/>
            <person name="Jung M."/>
            <person name="Krespan W."/>
            <person name="Perry M."/>
            <person name="Gordon-Kamm B."/>
            <person name="Liao L."/>
            <person name="Kim S."/>
            <person name="Hendrick C."/>
            <person name="Zhao Z.-Y."/>
            <person name="Dolan M."/>
            <person name="Chumley F."/>
            <person name="Tingey S.V."/>
            <person name="Tomb J.-F."/>
            <person name="Gordon M.P."/>
            <person name="Olson M.V."/>
            <person name="Nester E.W."/>
        </authorList>
    </citation>
    <scope>NUCLEOTIDE SEQUENCE [LARGE SCALE GENOMIC DNA]</scope>
    <source>
        <strain>C58 / ATCC 33970</strain>
    </source>
</reference>
<reference key="2">
    <citation type="journal article" date="2001" name="Science">
        <title>Genome sequence of the plant pathogen and biotechnology agent Agrobacterium tumefaciens C58.</title>
        <authorList>
            <person name="Goodner B."/>
            <person name="Hinkle G."/>
            <person name="Gattung S."/>
            <person name="Miller N."/>
            <person name="Blanchard M."/>
            <person name="Qurollo B."/>
            <person name="Goldman B.S."/>
            <person name="Cao Y."/>
            <person name="Askenazi M."/>
            <person name="Halling C."/>
            <person name="Mullin L."/>
            <person name="Houmiel K."/>
            <person name="Gordon J."/>
            <person name="Vaudin M."/>
            <person name="Iartchouk O."/>
            <person name="Epp A."/>
            <person name="Liu F."/>
            <person name="Wollam C."/>
            <person name="Allinger M."/>
            <person name="Doughty D."/>
            <person name="Scott C."/>
            <person name="Lappas C."/>
            <person name="Markelz B."/>
            <person name="Flanagan C."/>
            <person name="Crowell C."/>
            <person name="Gurson J."/>
            <person name="Lomo C."/>
            <person name="Sear C."/>
            <person name="Strub G."/>
            <person name="Cielo C."/>
            <person name="Slater S."/>
        </authorList>
    </citation>
    <scope>NUCLEOTIDE SEQUENCE [LARGE SCALE GENOMIC DNA]</scope>
    <source>
        <strain>C58 / ATCC 33970</strain>
    </source>
</reference>
<name>MOAC_AGRFC</name>
<protein>
    <recommendedName>
        <fullName evidence="1">Cyclic pyranopterin monophosphate synthase</fullName>
        <ecNumber evidence="1">4.6.1.17</ecNumber>
    </recommendedName>
    <alternativeName>
        <fullName evidence="1">Molybdenum cofactor biosynthesis protein C</fullName>
    </alternativeName>
</protein>
<sequence length="163" mass="17236">MSDGQKLTHIDASGEAHMVDVGDKAETVRVAVAEGFVKMKPETLALIRDGNAKKGDVIGTARLAGIMAAKQTANLIPLCHPLMLTKVAVDITEDTGLPGLRVEAMVKLSGKTGVEMEALTAVSIACLTIYDMAKAADKGMEIVNIRLLEKSGGKSGDFRRQES</sequence>
<feature type="chain" id="PRO_0000097781" description="Cyclic pyranopterin monophosphate synthase">
    <location>
        <begin position="1"/>
        <end position="163"/>
    </location>
</feature>
<feature type="active site" evidence="1">
    <location>
        <position position="131"/>
    </location>
</feature>
<feature type="binding site" evidence="1">
    <location>
        <begin position="78"/>
        <end position="80"/>
    </location>
    <ligand>
        <name>substrate</name>
    </ligand>
</feature>
<feature type="binding site" evidence="1">
    <location>
        <begin position="116"/>
        <end position="117"/>
    </location>
    <ligand>
        <name>substrate</name>
    </ligand>
</feature>
<dbReference type="EC" id="4.6.1.17" evidence="1"/>
<dbReference type="EMBL" id="AE007869">
    <property type="protein sequence ID" value="AAK87460.1"/>
    <property type="molecule type" value="Genomic_DNA"/>
</dbReference>
<dbReference type="PIR" id="AC2784">
    <property type="entry name" value="AC2784"/>
</dbReference>
<dbReference type="PIR" id="C97563">
    <property type="entry name" value="C97563"/>
</dbReference>
<dbReference type="RefSeq" id="NP_354675.1">
    <property type="nucleotide sequence ID" value="NC_003062.2"/>
</dbReference>
<dbReference type="RefSeq" id="WP_010971801.1">
    <property type="nucleotide sequence ID" value="NC_003062.2"/>
</dbReference>
<dbReference type="SMR" id="Q8UER6"/>
<dbReference type="STRING" id="176299.Atu1689"/>
<dbReference type="EnsemblBacteria" id="AAK87460">
    <property type="protein sequence ID" value="AAK87460"/>
    <property type="gene ID" value="Atu1689"/>
</dbReference>
<dbReference type="GeneID" id="1133727"/>
<dbReference type="KEGG" id="atu:Atu1689"/>
<dbReference type="PATRIC" id="fig|176299.10.peg.1703"/>
<dbReference type="eggNOG" id="COG0315">
    <property type="taxonomic scope" value="Bacteria"/>
</dbReference>
<dbReference type="HOGENOM" id="CLU_074693_1_1_5"/>
<dbReference type="OrthoDB" id="9794429at2"/>
<dbReference type="PhylomeDB" id="Q8UER6"/>
<dbReference type="BioCyc" id="AGRO:ATU1689-MONOMER"/>
<dbReference type="UniPathway" id="UPA00344"/>
<dbReference type="Proteomes" id="UP000000813">
    <property type="component" value="Chromosome circular"/>
</dbReference>
<dbReference type="GO" id="GO:0061799">
    <property type="term" value="F:cyclic pyranopterin monophosphate synthase activity"/>
    <property type="evidence" value="ECO:0007669"/>
    <property type="project" value="UniProtKB-UniRule"/>
</dbReference>
<dbReference type="GO" id="GO:0061798">
    <property type="term" value="F:GTP 3',8'-cyclase activity"/>
    <property type="evidence" value="ECO:0007669"/>
    <property type="project" value="TreeGrafter"/>
</dbReference>
<dbReference type="GO" id="GO:0006777">
    <property type="term" value="P:Mo-molybdopterin cofactor biosynthetic process"/>
    <property type="evidence" value="ECO:0007669"/>
    <property type="project" value="UniProtKB-UniRule"/>
</dbReference>
<dbReference type="CDD" id="cd01420">
    <property type="entry name" value="MoaC_PE"/>
    <property type="match status" value="1"/>
</dbReference>
<dbReference type="FunFam" id="3.30.70.640:FF:000001">
    <property type="entry name" value="Cyclic pyranopterin monophosphate synthase"/>
    <property type="match status" value="1"/>
</dbReference>
<dbReference type="Gene3D" id="3.30.70.640">
    <property type="entry name" value="Molybdopterin cofactor biosynthesis C (MoaC) domain"/>
    <property type="match status" value="1"/>
</dbReference>
<dbReference type="HAMAP" id="MF_01224_B">
    <property type="entry name" value="MoaC_B"/>
    <property type="match status" value="1"/>
</dbReference>
<dbReference type="InterPro" id="IPR023045">
    <property type="entry name" value="MoaC"/>
</dbReference>
<dbReference type="InterPro" id="IPR047594">
    <property type="entry name" value="MoaC_bact/euk"/>
</dbReference>
<dbReference type="InterPro" id="IPR036522">
    <property type="entry name" value="MoaC_sf"/>
</dbReference>
<dbReference type="InterPro" id="IPR050105">
    <property type="entry name" value="MoCo_biosynth_MoaA/MoaC"/>
</dbReference>
<dbReference type="InterPro" id="IPR002820">
    <property type="entry name" value="Mopterin_CF_biosynth-C_dom"/>
</dbReference>
<dbReference type="NCBIfam" id="TIGR00581">
    <property type="entry name" value="moaC"/>
    <property type="match status" value="1"/>
</dbReference>
<dbReference type="NCBIfam" id="NF006870">
    <property type="entry name" value="PRK09364.1"/>
    <property type="match status" value="1"/>
</dbReference>
<dbReference type="PANTHER" id="PTHR22960:SF0">
    <property type="entry name" value="MOLYBDENUM COFACTOR BIOSYNTHESIS PROTEIN 1"/>
    <property type="match status" value="1"/>
</dbReference>
<dbReference type="PANTHER" id="PTHR22960">
    <property type="entry name" value="MOLYBDOPTERIN COFACTOR SYNTHESIS PROTEIN A"/>
    <property type="match status" value="1"/>
</dbReference>
<dbReference type="Pfam" id="PF01967">
    <property type="entry name" value="MoaC"/>
    <property type="match status" value="1"/>
</dbReference>
<dbReference type="SUPFAM" id="SSF55040">
    <property type="entry name" value="Molybdenum cofactor biosynthesis protein C, MoaC"/>
    <property type="match status" value="1"/>
</dbReference>
<accession>Q8UER6</accession>